<gene>
    <name type="primary">murE</name>
    <name type="ordered locus">TM_0237</name>
</gene>
<protein>
    <recommendedName>
        <fullName>UDP-N-acetylmuramoyl-L-alanyl-D-glutamate--LD-lysine ligase</fullName>
        <ecNumber evidence="3">6.3.2.37</ecNumber>
        <ecNumber evidence="3">6.3.2.7</ecNumber>
    </recommendedName>
    <alternativeName>
        <fullName>D-lysine-adding enzyme</fullName>
    </alternativeName>
    <alternativeName>
        <fullName>L-lysine-adding enzyme</fullName>
    </alternativeName>
    <alternativeName>
        <fullName>UDP-MurNAc-L-Ala-D-Glu:LD-Lys ligase</fullName>
    </alternativeName>
    <alternativeName>
        <fullName>UDP-MurNAc-tripeptide synthetase</fullName>
    </alternativeName>
    <alternativeName>
        <fullName>UDP-N-acetylmuramyl-tripeptide synthetase</fullName>
    </alternativeName>
</protein>
<dbReference type="EC" id="6.3.2.37" evidence="3"/>
<dbReference type="EC" id="6.3.2.7" evidence="3"/>
<dbReference type="EMBL" id="AE000512">
    <property type="protein sequence ID" value="AAD35328.1"/>
    <property type="molecule type" value="Genomic_DNA"/>
</dbReference>
<dbReference type="PIR" id="G72402">
    <property type="entry name" value="G72402"/>
</dbReference>
<dbReference type="RefSeq" id="NP_228051.1">
    <property type="nucleotide sequence ID" value="NC_000853.1"/>
</dbReference>
<dbReference type="RefSeq" id="WP_004082936.1">
    <property type="nucleotide sequence ID" value="NZ_CP011107.1"/>
</dbReference>
<dbReference type="PDB" id="4BUB">
    <property type="method" value="X-ray"/>
    <property type="resolution" value="2.90 A"/>
    <property type="chains" value="A/B=1-490"/>
</dbReference>
<dbReference type="PDBsum" id="4BUB"/>
<dbReference type="SMR" id="Q9WY79"/>
<dbReference type="FunCoup" id="Q9WY79">
    <property type="interactions" value="389"/>
</dbReference>
<dbReference type="STRING" id="243274.TM_0237"/>
<dbReference type="PaxDb" id="243274-THEMA_03540"/>
<dbReference type="EnsemblBacteria" id="AAD35328">
    <property type="protein sequence ID" value="AAD35328"/>
    <property type="gene ID" value="TM_0237"/>
</dbReference>
<dbReference type="KEGG" id="tma:TM0237"/>
<dbReference type="KEGG" id="tmi:THEMA_03540"/>
<dbReference type="KEGG" id="tmm:Tmari_0235"/>
<dbReference type="KEGG" id="tmw:THMA_0244"/>
<dbReference type="eggNOG" id="COG0769">
    <property type="taxonomic scope" value="Bacteria"/>
</dbReference>
<dbReference type="InParanoid" id="Q9WY79"/>
<dbReference type="OrthoDB" id="9800958at2"/>
<dbReference type="BioCyc" id="MetaCyc:MONOMER-16146"/>
<dbReference type="UniPathway" id="UPA00219"/>
<dbReference type="EvolutionaryTrace" id="Q9WY79"/>
<dbReference type="Proteomes" id="UP000008183">
    <property type="component" value="Chromosome"/>
</dbReference>
<dbReference type="GO" id="GO:0005737">
    <property type="term" value="C:cytoplasm"/>
    <property type="evidence" value="ECO:0007669"/>
    <property type="project" value="UniProtKB-SubCell"/>
</dbReference>
<dbReference type="GO" id="GO:0005524">
    <property type="term" value="F:ATP binding"/>
    <property type="evidence" value="ECO:0007669"/>
    <property type="project" value="UniProtKB-UniRule"/>
</dbReference>
<dbReference type="GO" id="GO:0000287">
    <property type="term" value="F:magnesium ion binding"/>
    <property type="evidence" value="ECO:0007669"/>
    <property type="project" value="UniProtKB-UniRule"/>
</dbReference>
<dbReference type="GO" id="GO:0004326">
    <property type="term" value="F:tetrahydrofolylpolyglutamate synthase activity"/>
    <property type="evidence" value="ECO:0007669"/>
    <property type="project" value="InterPro"/>
</dbReference>
<dbReference type="GO" id="GO:0102195">
    <property type="term" value="F:UDP-N-acetylmuramoyl-L-alanyl-D-glutamate--D-lysine ligase activity"/>
    <property type="evidence" value="ECO:0007669"/>
    <property type="project" value="UniProtKB-EC"/>
</dbReference>
<dbReference type="GO" id="GO:0047482">
    <property type="term" value="F:UDP-N-acetylmuramoyl-L-alanyl-D-glutamate-L-lysine ligase activity"/>
    <property type="evidence" value="ECO:0007669"/>
    <property type="project" value="UniProtKB-EC"/>
</dbReference>
<dbReference type="GO" id="GO:0051301">
    <property type="term" value="P:cell division"/>
    <property type="evidence" value="ECO:0007669"/>
    <property type="project" value="UniProtKB-KW"/>
</dbReference>
<dbReference type="GO" id="GO:0071555">
    <property type="term" value="P:cell wall organization"/>
    <property type="evidence" value="ECO:0007669"/>
    <property type="project" value="UniProtKB-KW"/>
</dbReference>
<dbReference type="GO" id="GO:0009252">
    <property type="term" value="P:peptidoglycan biosynthetic process"/>
    <property type="evidence" value="ECO:0007669"/>
    <property type="project" value="UniProtKB-UniRule"/>
</dbReference>
<dbReference type="GO" id="GO:0008360">
    <property type="term" value="P:regulation of cell shape"/>
    <property type="evidence" value="ECO:0007669"/>
    <property type="project" value="UniProtKB-KW"/>
</dbReference>
<dbReference type="Gene3D" id="3.90.190.20">
    <property type="entry name" value="Mur ligase, C-terminal domain"/>
    <property type="match status" value="1"/>
</dbReference>
<dbReference type="Gene3D" id="3.40.1190.10">
    <property type="entry name" value="Mur-like, catalytic domain"/>
    <property type="match status" value="1"/>
</dbReference>
<dbReference type="Gene3D" id="3.40.1390.10">
    <property type="entry name" value="MurE/MurF, N-terminal domain"/>
    <property type="match status" value="1"/>
</dbReference>
<dbReference type="HAMAP" id="MF_00208">
    <property type="entry name" value="MurE"/>
    <property type="match status" value="1"/>
</dbReference>
<dbReference type="InterPro" id="IPR018109">
    <property type="entry name" value="Folylpolyglutamate_synth_CS"/>
</dbReference>
<dbReference type="InterPro" id="IPR036565">
    <property type="entry name" value="Mur-like_cat_sf"/>
</dbReference>
<dbReference type="InterPro" id="IPR004101">
    <property type="entry name" value="Mur_ligase_C"/>
</dbReference>
<dbReference type="InterPro" id="IPR036615">
    <property type="entry name" value="Mur_ligase_C_dom_sf"/>
</dbReference>
<dbReference type="InterPro" id="IPR013221">
    <property type="entry name" value="Mur_ligase_cen"/>
</dbReference>
<dbReference type="InterPro" id="IPR000713">
    <property type="entry name" value="Mur_ligase_N"/>
</dbReference>
<dbReference type="InterPro" id="IPR035911">
    <property type="entry name" value="MurE/MurF_N"/>
</dbReference>
<dbReference type="InterPro" id="IPR005761">
    <property type="entry name" value="UDP-N-AcMur-Glu-dNH2Pim_ligase"/>
</dbReference>
<dbReference type="NCBIfam" id="TIGR01085">
    <property type="entry name" value="murE"/>
    <property type="match status" value="1"/>
</dbReference>
<dbReference type="NCBIfam" id="NF001126">
    <property type="entry name" value="PRK00139.1-4"/>
    <property type="match status" value="1"/>
</dbReference>
<dbReference type="PANTHER" id="PTHR23135">
    <property type="entry name" value="MUR LIGASE FAMILY MEMBER"/>
    <property type="match status" value="1"/>
</dbReference>
<dbReference type="PANTHER" id="PTHR23135:SF4">
    <property type="entry name" value="UDP-N-ACETYLMURAMOYL-L-ALANYL-D-GLUTAMATE--2,6-DIAMINOPIMELATE LIGASE MURE HOMOLOG, CHLOROPLASTIC"/>
    <property type="match status" value="1"/>
</dbReference>
<dbReference type="Pfam" id="PF01225">
    <property type="entry name" value="Mur_ligase"/>
    <property type="match status" value="1"/>
</dbReference>
<dbReference type="Pfam" id="PF02875">
    <property type="entry name" value="Mur_ligase_C"/>
    <property type="match status" value="1"/>
</dbReference>
<dbReference type="Pfam" id="PF08245">
    <property type="entry name" value="Mur_ligase_M"/>
    <property type="match status" value="1"/>
</dbReference>
<dbReference type="SUPFAM" id="SSF53623">
    <property type="entry name" value="MurD-like peptide ligases, catalytic domain"/>
    <property type="match status" value="1"/>
</dbReference>
<dbReference type="SUPFAM" id="SSF53244">
    <property type="entry name" value="MurD-like peptide ligases, peptide-binding domain"/>
    <property type="match status" value="1"/>
</dbReference>
<dbReference type="SUPFAM" id="SSF63418">
    <property type="entry name" value="MurE/MurF N-terminal domain"/>
    <property type="match status" value="1"/>
</dbReference>
<feature type="chain" id="PRO_0000101962" description="UDP-N-acetylmuramoyl-L-alanyl-D-glutamate--LD-lysine ligase">
    <location>
        <begin position="1"/>
        <end position="490"/>
    </location>
</feature>
<feature type="binding site" evidence="1">
    <location>
        <position position="32"/>
    </location>
    <ligand>
        <name>UDP-N-acetyl-alpha-D-muramoyl-L-alanyl-D-glutamate</name>
        <dbReference type="ChEBI" id="CHEBI:83900"/>
    </ligand>
</feature>
<feature type="binding site" evidence="2">
    <location>
        <begin position="110"/>
        <end position="116"/>
    </location>
    <ligand>
        <name>ATP</name>
        <dbReference type="ChEBI" id="CHEBI:30616"/>
    </ligand>
</feature>
<feature type="binding site" evidence="1">
    <location>
        <begin position="152"/>
        <end position="153"/>
    </location>
    <ligand>
        <name>UDP-N-acetyl-alpha-D-muramoyl-L-alanyl-D-glutamate</name>
        <dbReference type="ChEBI" id="CHEBI:83900"/>
    </ligand>
</feature>
<feature type="binding site" evidence="1">
    <location>
        <position position="179"/>
    </location>
    <ligand>
        <name>UDP-N-acetyl-alpha-D-muramoyl-L-alanyl-D-glutamate</name>
        <dbReference type="ChEBI" id="CHEBI:83900"/>
    </ligand>
</feature>
<feature type="binding site" evidence="1">
    <location>
        <position position="185"/>
    </location>
    <ligand>
        <name>UDP-N-acetyl-alpha-D-muramoyl-L-alanyl-D-glutamate</name>
        <dbReference type="ChEBI" id="CHEBI:83900"/>
    </ligand>
</feature>
<feature type="binding site" evidence="1">
    <location>
        <position position="187"/>
    </location>
    <ligand>
        <name>UDP-N-acetyl-alpha-D-muramoyl-L-alanyl-D-glutamate</name>
        <dbReference type="ChEBI" id="CHEBI:83900"/>
    </ligand>
</feature>
<feature type="modified residue" description="N6-carboxylysine" evidence="1">
    <location>
        <position position="219"/>
    </location>
</feature>
<feature type="helix" evidence="5">
    <location>
        <begin position="3"/>
        <end position="9"/>
    </location>
</feature>
<feature type="turn" evidence="5">
    <location>
        <begin position="10"/>
        <end position="13"/>
    </location>
</feature>
<feature type="strand" evidence="5">
    <location>
        <begin position="14"/>
        <end position="19"/>
    </location>
</feature>
<feature type="strand" evidence="5">
    <location>
        <begin position="27"/>
        <end position="32"/>
    </location>
</feature>
<feature type="strand" evidence="5">
    <location>
        <begin position="37"/>
        <end position="43"/>
    </location>
</feature>
<feature type="helix" evidence="5">
    <location>
        <begin position="54"/>
        <end position="60"/>
    </location>
</feature>
<feature type="strand" evidence="5">
    <location>
        <begin position="64"/>
        <end position="70"/>
    </location>
</feature>
<feature type="strand" evidence="5">
    <location>
        <begin position="74"/>
        <end position="76"/>
    </location>
</feature>
<feature type="strand" evidence="5">
    <location>
        <begin position="78"/>
        <end position="82"/>
    </location>
</feature>
<feature type="helix" evidence="5">
    <location>
        <begin position="84"/>
        <end position="95"/>
    </location>
</feature>
<feature type="turn" evidence="5">
    <location>
        <begin position="99"/>
        <end position="102"/>
    </location>
</feature>
<feature type="strand" evidence="5">
    <location>
        <begin position="103"/>
        <end position="112"/>
    </location>
</feature>
<feature type="helix" evidence="5">
    <location>
        <begin position="114"/>
        <end position="126"/>
    </location>
</feature>
<feature type="strand" evidence="5">
    <location>
        <begin position="133"/>
        <end position="135"/>
    </location>
</feature>
<feature type="helix" evidence="5">
    <location>
        <begin position="156"/>
        <end position="168"/>
    </location>
</feature>
<feature type="strand" evidence="5">
    <location>
        <begin position="172"/>
        <end position="177"/>
    </location>
</feature>
<feature type="helix" evidence="5">
    <location>
        <begin position="182"/>
        <end position="185"/>
    </location>
</feature>
<feature type="turn" evidence="5">
    <location>
        <begin position="186"/>
        <end position="188"/>
    </location>
</feature>
<feature type="strand" evidence="5">
    <location>
        <begin position="193"/>
        <end position="198"/>
    </location>
</feature>
<feature type="strand" evidence="5">
    <location>
        <begin position="203"/>
        <end position="207"/>
    </location>
</feature>
<feature type="strand" evidence="5">
    <location>
        <begin position="209"/>
        <end position="211"/>
    </location>
</feature>
<feature type="helix" evidence="5">
    <location>
        <begin position="212"/>
        <end position="220"/>
    </location>
</feature>
<feature type="helix" evidence="5">
    <location>
        <begin position="221"/>
        <end position="223"/>
    </location>
</feature>
<feature type="strand" evidence="5">
    <location>
        <begin position="226"/>
        <end position="235"/>
    </location>
</feature>
<feature type="helix" evidence="5">
    <location>
        <begin position="236"/>
        <end position="238"/>
    </location>
</feature>
<feature type="turn" evidence="5">
    <location>
        <begin position="239"/>
        <end position="241"/>
    </location>
</feature>
<feature type="strand" evidence="5">
    <location>
        <begin position="246"/>
        <end position="254"/>
    </location>
</feature>
<feature type="strand" evidence="5">
    <location>
        <begin position="257"/>
        <end position="261"/>
    </location>
</feature>
<feature type="strand" evidence="5">
    <location>
        <begin position="272"/>
        <end position="276"/>
    </location>
</feature>
<feature type="strand" evidence="5">
    <location>
        <begin position="282"/>
        <end position="285"/>
    </location>
</feature>
<feature type="helix" evidence="5">
    <location>
        <begin position="293"/>
        <end position="305"/>
    </location>
</feature>
<feature type="turn" evidence="5">
    <location>
        <begin position="306"/>
        <end position="308"/>
    </location>
</feature>
<feature type="helix" evidence="5">
    <location>
        <begin position="311"/>
        <end position="315"/>
    </location>
</feature>
<feature type="turn" evidence="5">
    <location>
        <begin position="316"/>
        <end position="320"/>
    </location>
</feature>
<feature type="strand" evidence="5">
    <location>
        <begin position="327"/>
        <end position="330"/>
    </location>
</feature>
<feature type="helix" evidence="5">
    <location>
        <begin position="332"/>
        <end position="334"/>
    </location>
</feature>
<feature type="turn" evidence="5">
    <location>
        <begin position="335"/>
        <end position="338"/>
    </location>
</feature>
<feature type="strand" evidence="5">
    <location>
        <begin position="340"/>
        <end position="343"/>
    </location>
</feature>
<feature type="helix" evidence="5">
    <location>
        <begin position="349"/>
        <end position="362"/>
    </location>
</feature>
<feature type="strand" evidence="5">
    <location>
        <begin position="367"/>
        <end position="371"/>
    </location>
</feature>
<feature type="helix" evidence="5">
    <location>
        <begin position="383"/>
        <end position="392"/>
    </location>
</feature>
<feature type="strand" evidence="5">
    <location>
        <begin position="394"/>
        <end position="398"/>
    </location>
</feature>
<feature type="strand" evidence="5">
    <location>
        <begin position="404"/>
        <end position="406"/>
    </location>
</feature>
<feature type="helix" evidence="5">
    <location>
        <begin position="409"/>
        <end position="416"/>
    </location>
</feature>
<feature type="strand" evidence="5">
    <location>
        <begin position="425"/>
        <end position="427"/>
    </location>
</feature>
<feature type="helix" evidence="5">
    <location>
        <begin position="431"/>
        <end position="441"/>
    </location>
</feature>
<feature type="strand" evidence="5">
    <location>
        <begin position="447"/>
        <end position="450"/>
    </location>
</feature>
<feature type="strand" evidence="5">
    <location>
        <begin position="458"/>
        <end position="462"/>
    </location>
</feature>
<feature type="strand" evidence="5">
    <location>
        <begin position="465"/>
        <end position="468"/>
    </location>
</feature>
<feature type="helix" evidence="5">
    <location>
        <begin position="471"/>
        <end position="484"/>
    </location>
</feature>
<sequence>MNISTIVSNLKDLILEVRAPYDLEITGVSNHSSKVKKGDLFICRRGEKFDSHEIIPEVMEKGAVAVVVEREIDLDFPYIQVFDSRYFEAKVASLFFEDPWKDVLTFGVTGTNGKTTTTMMIYHMLTSLGERGSVLTTAVKRILGNSYYDDITTPDAITILSAMKENREGGGKFFALEVSSHALVQQRVEGVRFDVGIFTNISRDHLDFHGTFENYLKAKLHLFDLLKDDGVAVLNESLADAFNRKSRKITFGTSKNADYRLGNIEVSWEGTQFVLETPDGLLKVFTRAIGDFNAYNAAAAIAALHQLGYDPKDLASSLETFTGVEGRFEVVRGAKKIGLNVVVDFAHSPDALEKLLKNVRKISQGRVIVVFGAGGNSDRGKRPMMSEVASKLADVVILTTDDPRGEDPEQIMEDLIKGIDKRKPYLVLFDRREAIETALTIANRGDSVVIAGRGHERYQIIDEEKKVPFQDREVVEEIIRDKLKGRKYAQ</sequence>
<name>MURE_THEMA</name>
<comment type="function">
    <text evidence="3">Catalyzes the addition of both L- and D-lysine to the nucleotide precursor UDP-N-acetylmuramoyl-L-alanyl-D-glutamate (UMAG) in the biosynthesis of bacterial cell-wall peptidoglycan. Is also able to use meso-diaminopimelate as the amino acid substrate in vitro, although much less efficiently.</text>
</comment>
<comment type="catalytic activity">
    <reaction evidence="3">
        <text>UDP-N-acetyl-alpha-D-muramoyl-L-alanyl-D-glutamate + L-lysine + ATP = UDP-N-acetyl-alpha-D-muramoyl-L-alanyl-gamma-D-glutamyl-L-lysine + ADP + phosphate + H(+)</text>
        <dbReference type="Rhea" id="RHEA:17969"/>
        <dbReference type="ChEBI" id="CHEBI:15378"/>
        <dbReference type="ChEBI" id="CHEBI:30616"/>
        <dbReference type="ChEBI" id="CHEBI:32551"/>
        <dbReference type="ChEBI" id="CHEBI:43474"/>
        <dbReference type="ChEBI" id="CHEBI:83900"/>
        <dbReference type="ChEBI" id="CHEBI:83903"/>
        <dbReference type="ChEBI" id="CHEBI:456216"/>
        <dbReference type="EC" id="6.3.2.7"/>
    </reaction>
</comment>
<comment type="catalytic activity">
    <reaction evidence="3">
        <text>UDP-N-acetyl-alpha-D-muramoyl-L-alanyl-D-glutamate + D-lysine + ATP = N(6)-(UDP-N-acetyl-alpha-D-muramoyl-L-alanyl-gamma-D-glutamyl)-D-lysine + ADP + phosphate + H(+)</text>
        <dbReference type="Rhea" id="RHEA:25273"/>
        <dbReference type="ChEBI" id="CHEBI:15378"/>
        <dbReference type="ChEBI" id="CHEBI:30616"/>
        <dbReference type="ChEBI" id="CHEBI:32557"/>
        <dbReference type="ChEBI" id="CHEBI:43474"/>
        <dbReference type="ChEBI" id="CHEBI:83900"/>
        <dbReference type="ChEBI" id="CHEBI:83912"/>
        <dbReference type="ChEBI" id="CHEBI:456216"/>
        <dbReference type="EC" id="6.3.2.37"/>
    </reaction>
</comment>
<comment type="biophysicochemical properties">
    <kinetics>
        <KM evidence="3">0.45 mM for UDP-N-acetylmuramoyl-L-Ala-D-Glu</KM>
        <KM evidence="3">2.8 mM for L-lysine (at pH 9.4)</KM>
        <KM evidence="3">0.65 mM for L-lysine (at pH 8)</KM>
        <KM evidence="3">1.7 mM for D-lysine (at pH 9.4)</KM>
        <KM evidence="3">1 mM for D-lysine (at pH 8)</KM>
        <KM evidence="3">4.8 mM for meso-diaminopimelate (at pH 9.4)</KM>
        <KM evidence="3">27 mM for L-ornithine (at pH 9.4)</KM>
        <KM evidence="3">3.6 mM for ATP</KM>
        <text>The catalytic efficiency for the L-lysine adding activity is 4-fold and 10-fold higher than that for the D-lysine and meso-diaminopimelate adding activity, respectively.</text>
    </kinetics>
    <phDependence>
        <text evidence="3">Optimum pH is 9.4 for the L-lysine adding activity.</text>
    </phDependence>
    <temperatureDependence>
        <text evidence="3">Optimum temperature is 68 degrees Celsius for the L-lysine adding activity.</text>
    </temperatureDependence>
</comment>
<comment type="pathway">
    <text>Cell wall biogenesis; peptidoglycan biosynthesis.</text>
</comment>
<comment type="subcellular location">
    <subcellularLocation>
        <location evidence="1">Cytoplasm</location>
    </subcellularLocation>
</comment>
<comment type="PTM">
    <text evidence="1">Carboxylation is probably crucial for Mg(2+) binding and, consequently, for the gamma-phosphate positioning of ATP.</text>
</comment>
<comment type="miscellaneous">
    <text>The peptidoglycan of T.maritima was shown to contain approximate amounts of both enantiomers of lysine and no diaminopimelate.</text>
</comment>
<comment type="similarity">
    <text evidence="4">Belongs to the MurCDEF family. MurE subfamily.</text>
</comment>
<organism>
    <name type="scientific">Thermotoga maritima (strain ATCC 43589 / DSM 3109 / JCM 10099 / NBRC 100826 / MSB8)</name>
    <dbReference type="NCBI Taxonomy" id="243274"/>
    <lineage>
        <taxon>Bacteria</taxon>
        <taxon>Thermotogati</taxon>
        <taxon>Thermotogota</taxon>
        <taxon>Thermotogae</taxon>
        <taxon>Thermotogales</taxon>
        <taxon>Thermotogaceae</taxon>
        <taxon>Thermotoga</taxon>
    </lineage>
</organism>
<evidence type="ECO:0000250" key="1"/>
<evidence type="ECO:0000255" key="2"/>
<evidence type="ECO:0000269" key="3">
    <source>
    </source>
</evidence>
<evidence type="ECO:0000305" key="4"/>
<evidence type="ECO:0007829" key="5">
    <source>
        <dbReference type="PDB" id="4BUB"/>
    </source>
</evidence>
<keyword id="KW-0002">3D-structure</keyword>
<keyword id="KW-0067">ATP-binding</keyword>
<keyword id="KW-0131">Cell cycle</keyword>
<keyword id="KW-0132">Cell division</keyword>
<keyword id="KW-0133">Cell shape</keyword>
<keyword id="KW-0961">Cell wall biogenesis/degradation</keyword>
<keyword id="KW-0963">Cytoplasm</keyword>
<keyword id="KW-0436">Ligase</keyword>
<keyword id="KW-0547">Nucleotide-binding</keyword>
<keyword id="KW-0573">Peptidoglycan synthesis</keyword>
<keyword id="KW-1185">Reference proteome</keyword>
<proteinExistence type="evidence at protein level"/>
<accession>Q9WY79</accession>
<reference key="1">
    <citation type="journal article" date="1999" name="Nature">
        <title>Evidence for lateral gene transfer between Archaea and Bacteria from genome sequence of Thermotoga maritima.</title>
        <authorList>
            <person name="Nelson K.E."/>
            <person name="Clayton R.A."/>
            <person name="Gill S.R."/>
            <person name="Gwinn M.L."/>
            <person name="Dodson R.J."/>
            <person name="Haft D.H."/>
            <person name="Hickey E.K."/>
            <person name="Peterson J.D."/>
            <person name="Nelson W.C."/>
            <person name="Ketchum K.A."/>
            <person name="McDonald L.A."/>
            <person name="Utterback T.R."/>
            <person name="Malek J.A."/>
            <person name="Linher K.D."/>
            <person name="Garrett M.M."/>
            <person name="Stewart A.M."/>
            <person name="Cotton M.D."/>
            <person name="Pratt M.S."/>
            <person name="Phillips C.A."/>
            <person name="Richardson D.L."/>
            <person name="Heidelberg J.F."/>
            <person name="Sutton G.G."/>
            <person name="Fleischmann R.D."/>
            <person name="Eisen J.A."/>
            <person name="White O."/>
            <person name="Salzberg S.L."/>
            <person name="Smith H.O."/>
            <person name="Venter J.C."/>
            <person name="Fraser C.M."/>
        </authorList>
    </citation>
    <scope>NUCLEOTIDE SEQUENCE [LARGE SCALE GENOMIC DNA]</scope>
    <source>
        <strain>ATCC 43589 / DSM 3109 / JCM 10099 / NBRC 100826 / MSB8</strain>
    </source>
</reference>
<reference key="2">
    <citation type="journal article" date="2006" name="J. Biol. Chem.">
        <title>The MurE synthetase from Thermotoga maritima is endowed with an unusual D-lysine adding activity.</title>
        <authorList>
            <person name="Boniface A."/>
            <person name="Bouhss A."/>
            <person name="Mengin-Lecreulx D."/>
            <person name="Blanot D."/>
        </authorList>
    </citation>
    <scope>FUNCTION</scope>
    <scope>CATALYTIC ACTIVITY</scope>
    <scope>SUBSTRATE SPECIFICITY</scope>
    <scope>BIOPHYSICOCHEMICAL PROPERTIES</scope>
</reference>